<organism>
    <name type="scientific">Mesoplasma florum (strain ATCC 33453 / NBRC 100688 / NCTC 11704 / L1)</name>
    <name type="common">Acholeplasma florum</name>
    <dbReference type="NCBI Taxonomy" id="265311"/>
    <lineage>
        <taxon>Bacteria</taxon>
        <taxon>Bacillati</taxon>
        <taxon>Mycoplasmatota</taxon>
        <taxon>Mollicutes</taxon>
        <taxon>Entomoplasmatales</taxon>
        <taxon>Entomoplasmataceae</taxon>
        <taxon>Mesoplasma</taxon>
    </lineage>
</organism>
<feature type="chain" id="PRO_0000174547" description="S-adenosylmethionine synthase">
    <location>
        <begin position="1"/>
        <end position="377"/>
    </location>
</feature>
<feature type="region of interest" description="Flexible loop" evidence="1">
    <location>
        <begin position="98"/>
        <end position="108"/>
    </location>
</feature>
<feature type="binding site" description="in other chain" evidence="1">
    <location>
        <position position="14"/>
    </location>
    <ligand>
        <name>ATP</name>
        <dbReference type="ChEBI" id="CHEBI:30616"/>
        <note>ligand shared between two neighboring subunits</note>
    </ligand>
</feature>
<feature type="binding site" evidence="1">
    <location>
        <position position="16"/>
    </location>
    <ligand>
        <name>Mg(2+)</name>
        <dbReference type="ChEBI" id="CHEBI:18420"/>
    </ligand>
</feature>
<feature type="binding site" evidence="1">
    <location>
        <position position="42"/>
    </location>
    <ligand>
        <name>K(+)</name>
        <dbReference type="ChEBI" id="CHEBI:29103"/>
    </ligand>
</feature>
<feature type="binding site" description="in other chain" evidence="1">
    <location>
        <position position="98"/>
    </location>
    <ligand>
        <name>L-methionine</name>
        <dbReference type="ChEBI" id="CHEBI:57844"/>
        <note>ligand shared between two neighboring subunits</note>
    </ligand>
</feature>
<feature type="binding site" description="in other chain" evidence="1">
    <location>
        <begin position="162"/>
        <end position="164"/>
    </location>
    <ligand>
        <name>ATP</name>
        <dbReference type="ChEBI" id="CHEBI:30616"/>
        <note>ligand shared between two neighboring subunits</note>
    </ligand>
</feature>
<feature type="binding site" description="in other chain" evidence="1">
    <location>
        <begin position="228"/>
        <end position="229"/>
    </location>
    <ligand>
        <name>ATP</name>
        <dbReference type="ChEBI" id="CHEBI:30616"/>
        <note>ligand shared between two neighboring subunits</note>
    </ligand>
</feature>
<feature type="binding site" evidence="1">
    <location>
        <position position="237"/>
    </location>
    <ligand>
        <name>ATP</name>
        <dbReference type="ChEBI" id="CHEBI:30616"/>
        <note>ligand shared between two neighboring subunits</note>
    </ligand>
</feature>
<feature type="binding site" evidence="1">
    <location>
        <position position="237"/>
    </location>
    <ligand>
        <name>L-methionine</name>
        <dbReference type="ChEBI" id="CHEBI:57844"/>
        <note>ligand shared between two neighboring subunits</note>
    </ligand>
</feature>
<feature type="binding site" description="in other chain" evidence="1">
    <location>
        <begin position="243"/>
        <end position="244"/>
    </location>
    <ligand>
        <name>ATP</name>
        <dbReference type="ChEBI" id="CHEBI:30616"/>
        <note>ligand shared between two neighboring subunits</note>
    </ligand>
</feature>
<feature type="binding site" evidence="1">
    <location>
        <position position="260"/>
    </location>
    <ligand>
        <name>ATP</name>
        <dbReference type="ChEBI" id="CHEBI:30616"/>
        <note>ligand shared between two neighboring subunits</note>
    </ligand>
</feature>
<feature type="binding site" evidence="1">
    <location>
        <position position="264"/>
    </location>
    <ligand>
        <name>ATP</name>
        <dbReference type="ChEBI" id="CHEBI:30616"/>
        <note>ligand shared between two neighboring subunits</note>
    </ligand>
</feature>
<feature type="binding site" description="in other chain" evidence="1">
    <location>
        <position position="268"/>
    </location>
    <ligand>
        <name>L-methionine</name>
        <dbReference type="ChEBI" id="CHEBI:57844"/>
        <note>ligand shared between two neighboring subunits</note>
    </ligand>
</feature>
<dbReference type="EC" id="2.5.1.6" evidence="1"/>
<dbReference type="EMBL" id="AE017263">
    <property type="protein sequence ID" value="AAT75597.1"/>
    <property type="molecule type" value="Genomic_DNA"/>
</dbReference>
<dbReference type="RefSeq" id="WP_011183137.1">
    <property type="nucleotide sequence ID" value="NC_006055.1"/>
</dbReference>
<dbReference type="RefSeq" id="YP_053481.1">
    <property type="nucleotide sequence ID" value="NC_006055.1"/>
</dbReference>
<dbReference type="SMR" id="Q6F1M6"/>
<dbReference type="STRING" id="265311.Mfl240"/>
<dbReference type="PaxDb" id="265311-Mfl240"/>
<dbReference type="EnsemblBacteria" id="AAT75597">
    <property type="protein sequence ID" value="AAT75597"/>
    <property type="gene ID" value="Mfl240"/>
</dbReference>
<dbReference type="GeneID" id="2897779"/>
<dbReference type="KEGG" id="mfl:Mfl240"/>
<dbReference type="PATRIC" id="fig|265311.5.peg.240"/>
<dbReference type="eggNOG" id="COG0192">
    <property type="taxonomic scope" value="Bacteria"/>
</dbReference>
<dbReference type="HOGENOM" id="CLU_041802_1_1_14"/>
<dbReference type="OrthoDB" id="9801686at2"/>
<dbReference type="UniPathway" id="UPA00315">
    <property type="reaction ID" value="UER00080"/>
</dbReference>
<dbReference type="Proteomes" id="UP000006647">
    <property type="component" value="Chromosome"/>
</dbReference>
<dbReference type="GO" id="GO:0005737">
    <property type="term" value="C:cytoplasm"/>
    <property type="evidence" value="ECO:0007669"/>
    <property type="project" value="UniProtKB-SubCell"/>
</dbReference>
<dbReference type="GO" id="GO:0005524">
    <property type="term" value="F:ATP binding"/>
    <property type="evidence" value="ECO:0007669"/>
    <property type="project" value="UniProtKB-UniRule"/>
</dbReference>
<dbReference type="GO" id="GO:0000287">
    <property type="term" value="F:magnesium ion binding"/>
    <property type="evidence" value="ECO:0007669"/>
    <property type="project" value="UniProtKB-UniRule"/>
</dbReference>
<dbReference type="GO" id="GO:0004478">
    <property type="term" value="F:methionine adenosyltransferase activity"/>
    <property type="evidence" value="ECO:0007669"/>
    <property type="project" value="UniProtKB-UniRule"/>
</dbReference>
<dbReference type="GO" id="GO:0006730">
    <property type="term" value="P:one-carbon metabolic process"/>
    <property type="evidence" value="ECO:0007669"/>
    <property type="project" value="UniProtKB-KW"/>
</dbReference>
<dbReference type="GO" id="GO:0006556">
    <property type="term" value="P:S-adenosylmethionine biosynthetic process"/>
    <property type="evidence" value="ECO:0007669"/>
    <property type="project" value="UniProtKB-UniRule"/>
</dbReference>
<dbReference type="CDD" id="cd18079">
    <property type="entry name" value="S-AdoMet_synt"/>
    <property type="match status" value="1"/>
</dbReference>
<dbReference type="FunFam" id="3.30.300.10:FF:000003">
    <property type="entry name" value="S-adenosylmethionine synthase"/>
    <property type="match status" value="1"/>
</dbReference>
<dbReference type="Gene3D" id="3.30.300.10">
    <property type="match status" value="3"/>
</dbReference>
<dbReference type="HAMAP" id="MF_00086">
    <property type="entry name" value="S_AdoMet_synth1"/>
    <property type="match status" value="1"/>
</dbReference>
<dbReference type="InterPro" id="IPR022631">
    <property type="entry name" value="ADOMET_SYNTHASE_CS"/>
</dbReference>
<dbReference type="InterPro" id="IPR022630">
    <property type="entry name" value="S-AdoMet_synt_C"/>
</dbReference>
<dbReference type="InterPro" id="IPR022629">
    <property type="entry name" value="S-AdoMet_synt_central"/>
</dbReference>
<dbReference type="InterPro" id="IPR022628">
    <property type="entry name" value="S-AdoMet_synt_N"/>
</dbReference>
<dbReference type="InterPro" id="IPR002133">
    <property type="entry name" value="S-AdoMet_synthetase"/>
</dbReference>
<dbReference type="InterPro" id="IPR022636">
    <property type="entry name" value="S-AdoMet_synthetase_sfam"/>
</dbReference>
<dbReference type="NCBIfam" id="TIGR01034">
    <property type="entry name" value="metK"/>
    <property type="match status" value="1"/>
</dbReference>
<dbReference type="PANTHER" id="PTHR11964">
    <property type="entry name" value="S-ADENOSYLMETHIONINE SYNTHETASE"/>
    <property type="match status" value="1"/>
</dbReference>
<dbReference type="Pfam" id="PF02773">
    <property type="entry name" value="S-AdoMet_synt_C"/>
    <property type="match status" value="1"/>
</dbReference>
<dbReference type="Pfam" id="PF02772">
    <property type="entry name" value="S-AdoMet_synt_M"/>
    <property type="match status" value="1"/>
</dbReference>
<dbReference type="Pfam" id="PF00438">
    <property type="entry name" value="S-AdoMet_synt_N"/>
    <property type="match status" value="1"/>
</dbReference>
<dbReference type="PIRSF" id="PIRSF000497">
    <property type="entry name" value="MAT"/>
    <property type="match status" value="1"/>
</dbReference>
<dbReference type="SUPFAM" id="SSF55973">
    <property type="entry name" value="S-adenosylmethionine synthetase"/>
    <property type="match status" value="3"/>
</dbReference>
<dbReference type="PROSITE" id="PS00376">
    <property type="entry name" value="ADOMET_SYNTHASE_1"/>
    <property type="match status" value="1"/>
</dbReference>
<dbReference type="PROSITE" id="PS00377">
    <property type="entry name" value="ADOMET_SYNTHASE_2"/>
    <property type="match status" value="1"/>
</dbReference>
<protein>
    <recommendedName>
        <fullName evidence="1">S-adenosylmethionine synthase</fullName>
        <shortName evidence="1">AdoMet synthase</shortName>
        <ecNumber evidence="1">2.5.1.6</ecNumber>
    </recommendedName>
    <alternativeName>
        <fullName evidence="1">MAT</fullName>
    </alternativeName>
    <alternativeName>
        <fullName evidence="1">Methionine adenosyltransferase</fullName>
    </alternativeName>
</protein>
<gene>
    <name evidence="1" type="primary">metK</name>
    <name type="ordered locus">Mfl240</name>
</gene>
<sequence length="377" mass="41884">MRKLFTSESVSEGHPDKICDQISDAILDEVLKQDPNAKVACETFATTNYLLIGGQITTTASVDYEKIARDVLRKIGYNNDAYGINADTCKIDIRVEQQSADIALGIDLDTEVIGAGDQGIMFGYATNESKTFLPLAITISHELVYLASKLRKEGKFKWARPDMKSQVTIDYTDESNPKIDTILMSIQHDDEMIEEEFKKFIKSEIMDVVAKEFELNTDFNVLINPTGRFVIGGPQGDTGLTGRKIIVDTYGGYSRHGGGAFSGKDATKVDRSAAYMARYAAKNLVASGLADKIEIQVSYAIGKPEPVSIFIETFGTEKVSKEVIAKALNENFDFSVNEIIKKLDLRKPTFLKTATYGHFGKDEFTWEQLDKVKTIKK</sequence>
<name>METK_MESFL</name>
<keyword id="KW-0067">ATP-binding</keyword>
<keyword id="KW-0963">Cytoplasm</keyword>
<keyword id="KW-0460">Magnesium</keyword>
<keyword id="KW-0479">Metal-binding</keyword>
<keyword id="KW-0547">Nucleotide-binding</keyword>
<keyword id="KW-0554">One-carbon metabolism</keyword>
<keyword id="KW-0630">Potassium</keyword>
<keyword id="KW-1185">Reference proteome</keyword>
<keyword id="KW-0808">Transferase</keyword>
<evidence type="ECO:0000255" key="1">
    <source>
        <dbReference type="HAMAP-Rule" id="MF_00086"/>
    </source>
</evidence>
<reference key="1">
    <citation type="submission" date="2004-06" db="EMBL/GenBank/DDBJ databases">
        <authorList>
            <person name="Birren B.W."/>
            <person name="Stange-Thomann N."/>
            <person name="Hafez N."/>
            <person name="DeCaprio D."/>
            <person name="Fisher S."/>
            <person name="Butler J."/>
            <person name="Elkins T."/>
            <person name="Kodira C.D."/>
            <person name="Major J."/>
            <person name="Wang S."/>
            <person name="Nicol R."/>
            <person name="Nusbaum C."/>
        </authorList>
    </citation>
    <scope>NUCLEOTIDE SEQUENCE [LARGE SCALE GENOMIC DNA]</scope>
    <source>
        <strain>ATCC 33453 / NBRC 100688 / NCTC 11704 / L1</strain>
    </source>
</reference>
<comment type="function">
    <text evidence="1">Catalyzes the formation of S-adenosylmethionine (AdoMet) from methionine and ATP. The overall synthetic reaction is composed of two sequential steps, AdoMet formation and the subsequent tripolyphosphate hydrolysis which occurs prior to release of AdoMet from the enzyme.</text>
</comment>
<comment type="catalytic activity">
    <reaction evidence="1">
        <text>L-methionine + ATP + H2O = S-adenosyl-L-methionine + phosphate + diphosphate</text>
        <dbReference type="Rhea" id="RHEA:21080"/>
        <dbReference type="ChEBI" id="CHEBI:15377"/>
        <dbReference type="ChEBI" id="CHEBI:30616"/>
        <dbReference type="ChEBI" id="CHEBI:33019"/>
        <dbReference type="ChEBI" id="CHEBI:43474"/>
        <dbReference type="ChEBI" id="CHEBI:57844"/>
        <dbReference type="ChEBI" id="CHEBI:59789"/>
        <dbReference type="EC" id="2.5.1.6"/>
    </reaction>
</comment>
<comment type="cofactor">
    <cofactor evidence="1">
        <name>Mg(2+)</name>
        <dbReference type="ChEBI" id="CHEBI:18420"/>
    </cofactor>
    <text evidence="1">Binds 2 divalent ions per subunit.</text>
</comment>
<comment type="cofactor">
    <cofactor evidence="1">
        <name>K(+)</name>
        <dbReference type="ChEBI" id="CHEBI:29103"/>
    </cofactor>
    <text evidence="1">Binds 1 potassium ion per subunit.</text>
</comment>
<comment type="pathway">
    <text evidence="1">Amino-acid biosynthesis; S-adenosyl-L-methionine biosynthesis; S-adenosyl-L-methionine from L-methionine: step 1/1.</text>
</comment>
<comment type="subunit">
    <text evidence="1">Homotetramer; dimer of dimers.</text>
</comment>
<comment type="subcellular location">
    <subcellularLocation>
        <location evidence="1">Cytoplasm</location>
    </subcellularLocation>
</comment>
<comment type="similarity">
    <text evidence="1">Belongs to the AdoMet synthase family.</text>
</comment>
<proteinExistence type="inferred from homology"/>
<accession>Q6F1M6</accession>